<name>MURD_CHLFF</name>
<protein>
    <recommendedName>
        <fullName evidence="1">UDP-N-acetylmuramoylalanine--D-glutamate ligase</fullName>
        <ecNumber evidence="1">6.3.2.9</ecNumber>
    </recommendedName>
    <alternativeName>
        <fullName evidence="1">D-glutamic acid-adding enzyme</fullName>
    </alternativeName>
    <alternativeName>
        <fullName evidence="1">UDP-N-acetylmuramoyl-L-alanyl-D-glutamate synthetase</fullName>
    </alternativeName>
</protein>
<keyword id="KW-0067">ATP-binding</keyword>
<keyword id="KW-0131">Cell cycle</keyword>
<keyword id="KW-0132">Cell division</keyword>
<keyword id="KW-0133">Cell shape</keyword>
<keyword id="KW-0961">Cell wall biogenesis/degradation</keyword>
<keyword id="KW-0963">Cytoplasm</keyword>
<keyword id="KW-0436">Ligase</keyword>
<keyword id="KW-0547">Nucleotide-binding</keyword>
<keyword id="KW-0573">Peptidoglycan synthesis</keyword>
<comment type="function">
    <text evidence="1">Cell wall formation. Catalyzes the addition of glutamate to the nucleotide precursor UDP-N-acetylmuramoyl-L-alanine (UMA).</text>
</comment>
<comment type="catalytic activity">
    <reaction evidence="1">
        <text>UDP-N-acetyl-alpha-D-muramoyl-L-alanine + D-glutamate + ATP = UDP-N-acetyl-alpha-D-muramoyl-L-alanyl-D-glutamate + ADP + phosphate + H(+)</text>
        <dbReference type="Rhea" id="RHEA:16429"/>
        <dbReference type="ChEBI" id="CHEBI:15378"/>
        <dbReference type="ChEBI" id="CHEBI:29986"/>
        <dbReference type="ChEBI" id="CHEBI:30616"/>
        <dbReference type="ChEBI" id="CHEBI:43474"/>
        <dbReference type="ChEBI" id="CHEBI:83898"/>
        <dbReference type="ChEBI" id="CHEBI:83900"/>
        <dbReference type="ChEBI" id="CHEBI:456216"/>
        <dbReference type="EC" id="6.3.2.9"/>
    </reaction>
</comment>
<comment type="pathway">
    <text evidence="1">Cell wall biogenesis; peptidoglycan biosynthesis.</text>
</comment>
<comment type="subcellular location">
    <subcellularLocation>
        <location evidence="1">Cytoplasm</location>
    </subcellularLocation>
</comment>
<comment type="similarity">
    <text evidence="1">Belongs to the MurCDEF family.</text>
</comment>
<organism>
    <name type="scientific">Chlamydia felis (strain Fe/C-56)</name>
    <name type="common">Chlamydophila felis</name>
    <dbReference type="NCBI Taxonomy" id="264202"/>
    <lineage>
        <taxon>Bacteria</taxon>
        <taxon>Pseudomonadati</taxon>
        <taxon>Chlamydiota</taxon>
        <taxon>Chlamydiia</taxon>
        <taxon>Chlamydiales</taxon>
        <taxon>Chlamydiaceae</taxon>
        <taxon>Chlamydia/Chlamydophila group</taxon>
        <taxon>Chlamydia</taxon>
    </lineage>
</organism>
<gene>
    <name evidence="1" type="primary">murD</name>
    <name type="ordered locus">CF0149</name>
</gene>
<proteinExistence type="inferred from homology"/>
<sequence length="419" mass="46307">MNHQRVVVLGAGVTGKSAAEFLHKKGDFVIGIDGSWDALISCNFFHQRYLDKTENFPEDVDLFVRSPGIKTSHPLVIEAKRRDIPIVTDVQLAFQSPEFYQYPSLGITGSTGKTTTVLFLVHLLHSLGISAFAMGNIGFPILQAMYQKGVRVVEISSFQLTEQEQKIPVLSGAAILNISENHLDYHQTLHAYSEAKMNIAKCLQWPDSLWSGEGVSSGRSYLEYTEEIDSVLDKGGALKPLYLHDRNNYCAAYALAKEVTSVPLEAFLQAVQTFEKPPHRIEYLGEKDGVRYINDSKATTMSSVEKALMAVKENVIVIMGGRNKESNFTSLIPVLTQTVKHIVAMGECRKEIAQALSSSLPLTQARDLQEAVSIAQSIAQPGDVILLSPGCASFDQFRSFEERGDCFRQLVGDMEALKI</sequence>
<feature type="chain" id="PRO_0000257177" description="UDP-N-acetylmuramoylalanine--D-glutamate ligase">
    <location>
        <begin position="1"/>
        <end position="419"/>
    </location>
</feature>
<feature type="binding site" evidence="1">
    <location>
        <begin position="109"/>
        <end position="115"/>
    </location>
    <ligand>
        <name>ATP</name>
        <dbReference type="ChEBI" id="CHEBI:30616"/>
    </ligand>
</feature>
<accession>Q255W7</accession>
<evidence type="ECO:0000255" key="1">
    <source>
        <dbReference type="HAMAP-Rule" id="MF_00639"/>
    </source>
</evidence>
<dbReference type="EC" id="6.3.2.9" evidence="1"/>
<dbReference type="EMBL" id="AP006861">
    <property type="protein sequence ID" value="BAE80921.1"/>
    <property type="molecule type" value="Genomic_DNA"/>
</dbReference>
<dbReference type="RefSeq" id="WP_011457706.1">
    <property type="nucleotide sequence ID" value="NC_007899.1"/>
</dbReference>
<dbReference type="SMR" id="Q255W7"/>
<dbReference type="STRING" id="264202.CF0149"/>
<dbReference type="KEGG" id="cfe:CF0149"/>
<dbReference type="eggNOG" id="COG0771">
    <property type="taxonomic scope" value="Bacteria"/>
</dbReference>
<dbReference type="HOGENOM" id="CLU_032540_0_0_0"/>
<dbReference type="OrthoDB" id="9809796at2"/>
<dbReference type="UniPathway" id="UPA00219"/>
<dbReference type="Proteomes" id="UP000001260">
    <property type="component" value="Chromosome"/>
</dbReference>
<dbReference type="GO" id="GO:0005737">
    <property type="term" value="C:cytoplasm"/>
    <property type="evidence" value="ECO:0007669"/>
    <property type="project" value="UniProtKB-SubCell"/>
</dbReference>
<dbReference type="GO" id="GO:0005524">
    <property type="term" value="F:ATP binding"/>
    <property type="evidence" value="ECO:0007669"/>
    <property type="project" value="UniProtKB-UniRule"/>
</dbReference>
<dbReference type="GO" id="GO:0008764">
    <property type="term" value="F:UDP-N-acetylmuramoylalanine-D-glutamate ligase activity"/>
    <property type="evidence" value="ECO:0007669"/>
    <property type="project" value="UniProtKB-UniRule"/>
</dbReference>
<dbReference type="GO" id="GO:0051301">
    <property type="term" value="P:cell division"/>
    <property type="evidence" value="ECO:0007669"/>
    <property type="project" value="UniProtKB-KW"/>
</dbReference>
<dbReference type="GO" id="GO:0071555">
    <property type="term" value="P:cell wall organization"/>
    <property type="evidence" value="ECO:0007669"/>
    <property type="project" value="UniProtKB-KW"/>
</dbReference>
<dbReference type="GO" id="GO:0009252">
    <property type="term" value="P:peptidoglycan biosynthetic process"/>
    <property type="evidence" value="ECO:0007669"/>
    <property type="project" value="UniProtKB-UniRule"/>
</dbReference>
<dbReference type="GO" id="GO:0008360">
    <property type="term" value="P:regulation of cell shape"/>
    <property type="evidence" value="ECO:0007669"/>
    <property type="project" value="UniProtKB-KW"/>
</dbReference>
<dbReference type="Gene3D" id="3.90.190.20">
    <property type="entry name" value="Mur ligase, C-terminal domain"/>
    <property type="match status" value="1"/>
</dbReference>
<dbReference type="Gene3D" id="3.40.1190.10">
    <property type="entry name" value="Mur-like, catalytic domain"/>
    <property type="match status" value="1"/>
</dbReference>
<dbReference type="Gene3D" id="3.40.50.720">
    <property type="entry name" value="NAD(P)-binding Rossmann-like Domain"/>
    <property type="match status" value="1"/>
</dbReference>
<dbReference type="HAMAP" id="MF_00639">
    <property type="entry name" value="MurD"/>
    <property type="match status" value="1"/>
</dbReference>
<dbReference type="InterPro" id="IPR036565">
    <property type="entry name" value="Mur-like_cat_sf"/>
</dbReference>
<dbReference type="InterPro" id="IPR004101">
    <property type="entry name" value="Mur_ligase_C"/>
</dbReference>
<dbReference type="InterPro" id="IPR036615">
    <property type="entry name" value="Mur_ligase_C_dom_sf"/>
</dbReference>
<dbReference type="InterPro" id="IPR013221">
    <property type="entry name" value="Mur_ligase_cen"/>
</dbReference>
<dbReference type="InterPro" id="IPR005762">
    <property type="entry name" value="MurD"/>
</dbReference>
<dbReference type="NCBIfam" id="TIGR01087">
    <property type="entry name" value="murD"/>
    <property type="match status" value="1"/>
</dbReference>
<dbReference type="PANTHER" id="PTHR43692">
    <property type="entry name" value="UDP-N-ACETYLMURAMOYLALANINE--D-GLUTAMATE LIGASE"/>
    <property type="match status" value="1"/>
</dbReference>
<dbReference type="PANTHER" id="PTHR43692:SF1">
    <property type="entry name" value="UDP-N-ACETYLMURAMOYLALANINE--D-GLUTAMATE LIGASE"/>
    <property type="match status" value="1"/>
</dbReference>
<dbReference type="Pfam" id="PF02875">
    <property type="entry name" value="Mur_ligase_C"/>
    <property type="match status" value="1"/>
</dbReference>
<dbReference type="Pfam" id="PF08245">
    <property type="entry name" value="Mur_ligase_M"/>
    <property type="match status" value="1"/>
</dbReference>
<dbReference type="SUPFAM" id="SSF51984">
    <property type="entry name" value="MurCD N-terminal domain"/>
    <property type="match status" value="1"/>
</dbReference>
<dbReference type="SUPFAM" id="SSF53623">
    <property type="entry name" value="MurD-like peptide ligases, catalytic domain"/>
    <property type="match status" value="1"/>
</dbReference>
<dbReference type="SUPFAM" id="SSF53244">
    <property type="entry name" value="MurD-like peptide ligases, peptide-binding domain"/>
    <property type="match status" value="1"/>
</dbReference>
<reference key="1">
    <citation type="journal article" date="2006" name="DNA Res.">
        <title>Genome sequence of the cat pathogen, Chlamydophila felis.</title>
        <authorList>
            <person name="Azuma Y."/>
            <person name="Hirakawa H."/>
            <person name="Yamashita A."/>
            <person name="Cai Y."/>
            <person name="Rahman M.A."/>
            <person name="Suzuki H."/>
            <person name="Mitaku S."/>
            <person name="Toh H."/>
            <person name="Goto S."/>
            <person name="Murakami T."/>
            <person name="Sugi K."/>
            <person name="Hayashi H."/>
            <person name="Fukushi H."/>
            <person name="Hattori M."/>
            <person name="Kuhara S."/>
            <person name="Shirai M."/>
        </authorList>
    </citation>
    <scope>NUCLEOTIDE SEQUENCE [LARGE SCALE GENOMIC DNA]</scope>
    <source>
        <strain>Fe/C-56</strain>
    </source>
</reference>